<gene>
    <name evidence="6" type="primary">SALR</name>
</gene>
<sequence>MPETCPNTVTKMRCAVVTGGNKGIGFEICKQLSSSGIMVVLTCRDVTRGLEAVEKLKNSNHENVVFHQLDVTDPITTMSSLADFIKARFGKLDILVNNAGVAGFSVDADRFKAMISDIGEDSEEVVKIYEKPEAQELMSETYELAEECLKINYYGVKSVTEVLLPLLQLSDSPRIVNVSSSTGSLKYVSNETALEILGDGDALTEERIDMVVNMLLKDFKENLIETNGWPSFGAAYTTSKACLNAYTRVLAKKIPKFQVNCVCPGLVKTEMNYGIGNYTADEGAKHVVRIALFPDDGPSGFFYDCSELSAF</sequence>
<organism>
    <name type="scientific">Papaver bracteatum</name>
    <name type="common">Great scarlet poppy</name>
    <dbReference type="NCBI Taxonomy" id="215227"/>
    <lineage>
        <taxon>Eukaryota</taxon>
        <taxon>Viridiplantae</taxon>
        <taxon>Streptophyta</taxon>
        <taxon>Embryophyta</taxon>
        <taxon>Tracheophyta</taxon>
        <taxon>Spermatophyta</taxon>
        <taxon>Magnoliopsida</taxon>
        <taxon>Ranunculales</taxon>
        <taxon>Papaveraceae</taxon>
        <taxon>Papaveroideae</taxon>
        <taxon>Papaver</taxon>
    </lineage>
</organism>
<proteinExistence type="evidence at protein level"/>
<comment type="function">
    <text evidence="3 4">Involved in biosynthesis of morphinan-type benzylisoquinoline alkaloids. Catalyzes the stereospecific conversion of salutaridine to salutaridinol.</text>
</comment>
<comment type="catalytic activity">
    <reaction evidence="3 4">
        <text>(7S)-salutaridinol + NADP(+) = salutaridine + NADPH + H(+)</text>
        <dbReference type="Rhea" id="RHEA:10108"/>
        <dbReference type="ChEBI" id="CHEBI:15378"/>
        <dbReference type="ChEBI" id="CHEBI:57783"/>
        <dbReference type="ChEBI" id="CHEBI:58061"/>
        <dbReference type="ChEBI" id="CHEBI:58349"/>
        <dbReference type="ChEBI" id="CHEBI:58463"/>
        <dbReference type="EC" id="1.1.1.248"/>
    </reaction>
</comment>
<comment type="activity regulation">
    <text evidence="3 4">Subject to substrate inhibition at salutaridine concentrations higher than 20 to 30 uM.</text>
</comment>
<comment type="biophysicochemical properties">
    <kinetics>
        <KM evidence="3 4">7.9 uM for salutaridine (Termination and extraction with NaHCO(3) and ethylacetate, respectively)</KM>
        <KM evidence="3 4">2.1 uM for salutaridine (Termination with methanol without extraction)</KM>
        <KM evidence="3 4">1.5 uM for salutaridinol</KM>
        <KM evidence="3 4">3.5 uM for NADPH</KM>
        <KM evidence="3 4">1190 uM for NADH</KM>
        <KM evidence="3 4">7 uM for NADP(+)</KM>
        <Vmax evidence="3 4">63.2 nmol/sec/mg enzyme with salutaridine as substrate (Termination and extraction with NaHCO(3) and ethylacetate, respectively)</Vmax>
        <Vmax evidence="3 4">35.6 nmol/sec/mg enzyme with salutaridine as substrate (Termination with methanol without extraction)</Vmax>
        <Vmax evidence="3 4">588.0 nmol/sec/mg enzyme with salutaridinol as substrate</Vmax>
        <Vmax evidence="3 4">57.3 nmol/sec/mg enzyme with NADPH as substrate</Vmax>
        <Vmax evidence="3 4">102.0 nmol/sec/mg enzyme with NADH as substrate</Vmax>
        <Vmax evidence="3 4">598.0 nmol/sec/mg enzyme with NADP(+) as substrate</Vmax>
        <text evidence="3 4">The enzyme does not obey Michaelis-Menten kinetics because the theorectical Vmax cannot be achieved due to strong substrate inhibition, instead the optimal velocity, Vopt, is taken as the measure of enzyme performance.</text>
    </kinetics>
    <phDependence>
        <text evidence="3 4">Optimum pH is 6 for the reverse reaction (reduction) with activity decreasing sharply towards pH 4.5 and pH 7.5. Optimum pH is 9.5 for the forward reaction (oxidation) with greatly reduced activity at pH 6.</text>
    </phDependence>
    <temperatureDependence>
        <text evidence="3 4">Optimum temperature is 40 degrees Celsius.</text>
    </temperatureDependence>
</comment>
<comment type="biotechnology">
    <text evidence="4">Has potential use in industrialized synthesis of the antitussivum codeine and the analgesic morphine.</text>
</comment>
<comment type="similarity">
    <text evidence="2">Belongs to the short-chain dehydrogenases/reductases (SDR) family.</text>
</comment>
<accession>A4UHT7</accession>
<evidence type="ECO:0000250" key="1"/>
<evidence type="ECO:0000255" key="2"/>
<evidence type="ECO:0000269" key="3">
    <source>
    </source>
</evidence>
<evidence type="ECO:0000269" key="4">
    <source>
    </source>
</evidence>
<evidence type="ECO:0000305" key="5"/>
<evidence type="ECO:0000312" key="6">
    <source>
        <dbReference type="EMBL" id="ABO93462.1"/>
    </source>
</evidence>
<feature type="chain" id="PRO_0000391437" description="Salutaridine reductase">
    <location>
        <begin position="1"/>
        <end position="311"/>
    </location>
</feature>
<feature type="active site" description="Proton acceptor" evidence="1">
    <location>
        <position position="236"/>
    </location>
</feature>
<feature type="binding site" evidence="1">
    <location>
        <begin position="17"/>
        <end position="40"/>
    </location>
    <ligand>
        <name>NADP(+)</name>
        <dbReference type="ChEBI" id="CHEBI:58349"/>
    </ligand>
</feature>
<feature type="binding site" evidence="1">
    <location>
        <position position="180"/>
    </location>
    <ligand>
        <name>substrate</name>
    </ligand>
</feature>
<feature type="mutagenesis site" description="More than 50-fold decrease in affinity towards NADPH." evidence="3">
    <original>R</original>
    <variation>E</variation>
    <location>
        <position position="44"/>
    </location>
</feature>
<feature type="mutagenesis site" description="30-fold decrease in affinity towards NADPH. 1.5-fold increase in affinity towards NADH." evidence="3">
    <original>R</original>
    <variation>E</variation>
    <location>
        <position position="48"/>
    </location>
</feature>
<feature type="mutagenesis site" description="2.5-fold decrease in affinity towards NADPH. 2-fold increase in affinity towards NADH." evidence="3">
    <original>R</original>
    <variation>K</variation>
    <location>
        <position position="48"/>
    </location>
</feature>
<feature type="mutagenesis site" description="Strong decrease in substrate affinity and catalytic efficiency. Strongly reduced substrate inhibition. Almost 200-fold decrease in substrate affinity and 112-fold decrease in catalytic efficiency but no substrate inhibition; when associated with A-275." evidence="3 4">
    <original>F</original>
    <variation>A</variation>
    <location>
        <position position="104"/>
    </location>
</feature>
<feature type="mutagenesis site" description="Decrease in substrate affinity. Increase in catalytic efficiency." evidence="3 4">
    <original>V</original>
    <variation>A</variation>
    <location>
        <position position="106"/>
    </location>
</feature>
<feature type="mutagenesis site" description="7-fold decrease in substrate affinity. 15-fold decrease in catalytic efficiency. Strongly reduced substrate inhibition." evidence="4">
    <original>D</original>
    <variation>A</variation>
    <location>
        <position position="107"/>
    </location>
</feature>
<feature type="mutagenesis site" description="6-fold decrease in catalytic efficiency." evidence="3">
    <original>N</original>
    <variation>A</variation>
    <location>
        <position position="152"/>
    </location>
</feature>
<feature type="mutagenesis site" description="3-fold decrease in substrate affinity. More than 2300-fold decrease in catalytic efficiency." evidence="3">
    <original>S</original>
    <variation>A</variation>
    <location>
        <position position="180"/>
    </location>
</feature>
<feature type="mutagenesis site" description="More than 2-fold decrease in substrate affinity. 1.5-fold decrease in catalytic efficiency." evidence="4">
    <original>S</original>
    <variation>A</variation>
    <location>
        <position position="181"/>
    </location>
</feature>
<feature type="mutagenesis site" description="2-fold decrease in substrate affinity. 20-fold decrease in catalytic efficiency." evidence="4">
    <original>T</original>
    <variation>A</variation>
    <location>
        <position position="182"/>
    </location>
</feature>
<feature type="mutagenesis site" description="6-fold decrease in substrate affinity. 550-fold decrease in catalytic efficiency. No substrate inhibition." evidence="4">
    <original>L</original>
    <variation>A</variation>
    <location>
        <position position="185"/>
    </location>
</feature>
<feature type="mutagenesis site" description="Almost 2-fold increase in substrate affinity. Almost 5-fold decrease in catalytic efficiency." evidence="4">
    <original>L</original>
    <variation>S</variation>
    <location>
        <position position="185"/>
    </location>
</feature>
<feature type="mutagenesis site" description="Almost 2-fold decrease in catalytic efficiency." evidence="4">
    <original>L</original>
    <variation>V</variation>
    <location>
        <position position="185"/>
    </location>
</feature>
<feature type="mutagenesis site" description="Almost 4-fold decrease in substrate affinity. More than 4-fold decrease in catalytic efficiency." evidence="4">
    <original>K</original>
    <variation>V</variation>
    <location>
        <position position="186"/>
    </location>
</feature>
<feature type="mutagenesis site" description="Inactive." evidence="3">
    <original>Y</original>
    <variation>F</variation>
    <location>
        <position position="236"/>
    </location>
</feature>
<feature type="mutagenesis site" description="Inactive." evidence="3">
    <original>K</original>
    <variation>E</variation>
    <location>
        <position position="240"/>
    </location>
</feature>
<feature type="mutagenesis site" description="Strong decrease in substrate affinity and catalytic efficiency. No substrate inhibition." evidence="3 4">
    <original>L</original>
    <variation>A</variation>
    <location>
        <position position="266"/>
    </location>
</feature>
<feature type="mutagenesis site" description="12-fold decrease in substrate affinity and 26-fold decrease in catalytic efficiency." evidence="3 4">
    <original>L</original>
    <variation>S</variation>
    <location>
        <position position="266"/>
    </location>
</feature>
<feature type="mutagenesis site" description="6-fold decrease in substrate affinity. 7-fold decrease in catalytic efficiency." evidence="3 4">
    <original>L</original>
    <variation>V</variation>
    <location>
        <position position="266"/>
    </location>
</feature>
<feature type="mutagenesis site" description="Almost 11-fold decrease in substrate affinity and 2200-fold decrease in catalytic efficiency but no substrate inhibition." evidence="3 4">
    <original>M</original>
    <variation>A</variation>
    <location>
        <position position="271"/>
    </location>
</feature>
<feature type="mutagenesis site" description="Inactive." evidence="3 4">
    <original>M</original>
    <variation>T</variation>
    <location>
        <position position="271"/>
    </location>
</feature>
<feature type="mutagenesis site" description="Almost 43-fold decrease in substrate affinity and 3300-fold decrease in catalytic efficiency but no substrate inhibition." evidence="3 4">
    <original>N</original>
    <variation>A</variation>
    <location>
        <position position="272"/>
    </location>
</feature>
<feature type="mutagenesis site" description="Inactive." evidence="3 4">
    <original>N</original>
    <variation>T</variation>
    <location>
        <position position="272"/>
    </location>
</feature>
<feature type="mutagenesis site" description="15-fold decrease in substrate affinity. Almost 7-fold decrease in catalytic efficiency and strongly reduced substrate inhibition. Almost 200-fold decrease in substrate affinity and 112-fold decrease in catalytic efficiency but no substrate inhibition; when associated with A-104." evidence="4">
    <original>I</original>
    <variation>A</variation>
    <location>
        <position position="275"/>
    </location>
</feature>
<feature type="mutagenesis site" description="Slight decrease in catalytic efficiency." evidence="4">
    <original>I</original>
    <variation>V</variation>
    <location>
        <position position="275"/>
    </location>
</feature>
<reference evidence="5 6" key="1">
    <citation type="journal article" date="2007" name="Plant Physiol.">
        <title>Molecular modeling and site-directed mutagenesis reveal the benzylisoquinoline binding site of the short-chain dehydrogenase/reductase salutaridine reductase.</title>
        <authorList>
            <person name="Geissler R."/>
            <person name="Brandt W."/>
            <person name="Ziegler J."/>
        </authorList>
    </citation>
    <scope>NUCLEOTIDE SEQUENCE [MRNA]</scope>
    <scope>FUNCTION</scope>
    <scope>CATALYTIC ACTIVITY</scope>
    <scope>ACTIVITY REGULATION</scope>
    <scope>BIOPHYSICOCHEMICAL PROPERTIES</scope>
    <scope>MUTAGENESIS OF ARG-44; ARG-48; PHE-104; VAL-106; ASN-152; SER-180; TYR-236; LYS-240; LEU-266; MET-271 AND ASN-272</scope>
</reference>
<reference evidence="5" key="2">
    <citation type="journal article" date="2009" name="J. Biol. Chem.">
        <title>Removal of substrate inhibition and increase in maximal velocity in the short chain dehydrogenase/reductase salutaridine reductase involved in morphine biosynthesis.</title>
        <authorList>
            <person name="Ziegler J."/>
            <person name="Brandt W."/>
            <person name="Geissler R."/>
            <person name="Facchini P.J."/>
        </authorList>
    </citation>
    <scope>FUNCTION</scope>
    <scope>CATALYTIC ACTIVITY</scope>
    <scope>ACTIVITY REGULATION</scope>
    <scope>BIOPHYSICOCHEMICAL PROPERTIES</scope>
    <scope>BIOTECHNOLOGY</scope>
    <scope>MUTAGENESIS OF PHE-104; VAL-106; ASP-107; SER-181; THR-182; LEU-185; LYS-186; LEU-266; MET-271; ASN-272 AND ILE-275</scope>
</reference>
<name>SALR_PAPBR</name>
<dbReference type="EC" id="1.1.1.248"/>
<dbReference type="EMBL" id="EF184229">
    <property type="protein sequence ID" value="ABO93462.1"/>
    <property type="molecule type" value="mRNA"/>
</dbReference>
<dbReference type="SMR" id="A4UHT7"/>
<dbReference type="BRENDA" id="1.1.1.248">
    <property type="organism ID" value="4514"/>
</dbReference>
<dbReference type="PRO" id="PR:A4UHT7"/>
<dbReference type="GO" id="GO:0016020">
    <property type="term" value="C:membrane"/>
    <property type="evidence" value="ECO:0007669"/>
    <property type="project" value="TreeGrafter"/>
</dbReference>
<dbReference type="GO" id="GO:0047037">
    <property type="term" value="F:salutaridine reductase (NADPH) activity"/>
    <property type="evidence" value="ECO:0007669"/>
    <property type="project" value="UniProtKB-EC"/>
</dbReference>
<dbReference type="GO" id="GO:0009820">
    <property type="term" value="P:alkaloid metabolic process"/>
    <property type="evidence" value="ECO:0007669"/>
    <property type="project" value="UniProtKB-KW"/>
</dbReference>
<dbReference type="CDD" id="cd05324">
    <property type="entry name" value="carb_red_PTCR-like_SDR_c"/>
    <property type="match status" value="1"/>
</dbReference>
<dbReference type="Gene3D" id="3.40.50.720">
    <property type="entry name" value="NAD(P)-binding Rossmann-like Domain"/>
    <property type="match status" value="1"/>
</dbReference>
<dbReference type="InterPro" id="IPR045313">
    <property type="entry name" value="CBR1-like"/>
</dbReference>
<dbReference type="InterPro" id="IPR036291">
    <property type="entry name" value="NAD(P)-bd_dom_sf"/>
</dbReference>
<dbReference type="InterPro" id="IPR002347">
    <property type="entry name" value="SDR_fam"/>
</dbReference>
<dbReference type="PANTHER" id="PTHR43490">
    <property type="entry name" value="(+)-NEOMENTHOL DEHYDROGENASE"/>
    <property type="match status" value="1"/>
</dbReference>
<dbReference type="PANTHER" id="PTHR43490:SF131">
    <property type="entry name" value="SALUTARIDINE REDUCTASE-LIKE ISOFORM X2"/>
    <property type="match status" value="1"/>
</dbReference>
<dbReference type="Pfam" id="PF00106">
    <property type="entry name" value="adh_short"/>
    <property type="match status" value="1"/>
</dbReference>
<dbReference type="Pfam" id="PF13561">
    <property type="entry name" value="adh_short_C2"/>
    <property type="match status" value="1"/>
</dbReference>
<dbReference type="PRINTS" id="PR00081">
    <property type="entry name" value="GDHRDH"/>
</dbReference>
<dbReference type="PRINTS" id="PR00080">
    <property type="entry name" value="SDRFAMILY"/>
</dbReference>
<dbReference type="SUPFAM" id="SSF51735">
    <property type="entry name" value="NAD(P)-binding Rossmann-fold domains"/>
    <property type="match status" value="1"/>
</dbReference>
<keyword id="KW-0017">Alkaloid metabolism</keyword>
<keyword id="KW-0520">NAD</keyword>
<keyword id="KW-0521">NADP</keyword>
<keyword id="KW-0560">Oxidoreductase</keyword>
<protein>
    <recommendedName>
        <fullName evidence="6">Salutaridine reductase</fullName>
        <ecNumber>1.1.1.248</ecNumber>
    </recommendedName>
</protein>